<name>RM53_MOUSE</name>
<comment type="subunit">
    <text evidence="1">Component of the mitochondrial ribosome large subunit (39S) which comprises a 16S rRNA and about 50 distinct proteins.</text>
</comment>
<comment type="subcellular location">
    <subcellularLocation>
        <location evidence="1">Mitochondrion</location>
    </subcellularLocation>
</comment>
<comment type="similarity">
    <text evidence="4">Belongs to the mitochondrion-specific ribosomal protein mL53 family.</text>
</comment>
<dbReference type="EMBL" id="AK003549">
    <property type="protein sequence ID" value="BAB22849.1"/>
    <property type="molecule type" value="mRNA"/>
</dbReference>
<dbReference type="EMBL" id="BC065995">
    <property type="protein sequence ID" value="AAH65995.1"/>
    <property type="molecule type" value="mRNA"/>
</dbReference>
<dbReference type="EMBL" id="BC022162">
    <property type="protein sequence ID" value="AAH22162.1"/>
    <property type="molecule type" value="mRNA"/>
</dbReference>
<dbReference type="CCDS" id="CCDS20272.1"/>
<dbReference type="RefSeq" id="NP_081020.1">
    <property type="nucleotide sequence ID" value="NM_026744.3"/>
</dbReference>
<dbReference type="SMR" id="Q9D1H8"/>
<dbReference type="BioGRID" id="212889">
    <property type="interactions" value="13"/>
</dbReference>
<dbReference type="ComplexPortal" id="CPX-5302">
    <property type="entry name" value="39S mitochondrial large ribosomal subunit"/>
</dbReference>
<dbReference type="FunCoup" id="Q9D1H8">
    <property type="interactions" value="703"/>
</dbReference>
<dbReference type="IntAct" id="Q9D1H8">
    <property type="interactions" value="1"/>
</dbReference>
<dbReference type="STRING" id="10090.ENSMUSP00000109571"/>
<dbReference type="GlyGen" id="Q9D1H8">
    <property type="glycosylation" value="1 site, 1 O-linked glycan (1 site)"/>
</dbReference>
<dbReference type="iPTMnet" id="Q9D1H8"/>
<dbReference type="PhosphoSitePlus" id="Q9D1H8"/>
<dbReference type="jPOST" id="Q9D1H8"/>
<dbReference type="PaxDb" id="10090-ENSMUSP00000109571"/>
<dbReference type="PeptideAtlas" id="Q9D1H8"/>
<dbReference type="ProteomicsDB" id="299911"/>
<dbReference type="Pumba" id="Q9D1H8"/>
<dbReference type="Antibodypedia" id="70616">
    <property type="antibodies" value="46 antibodies from 14 providers"/>
</dbReference>
<dbReference type="Ensembl" id="ENSMUST00000113938.5">
    <property type="protein sequence ID" value="ENSMUSP00000109571.4"/>
    <property type="gene ID" value="ENSMUSG00000030037.10"/>
</dbReference>
<dbReference type="GeneID" id="68499"/>
<dbReference type="KEGG" id="mmu:68499"/>
<dbReference type="UCSC" id="uc009cmm.1">
    <property type="organism name" value="mouse"/>
</dbReference>
<dbReference type="AGR" id="MGI:1915749"/>
<dbReference type="CTD" id="116540"/>
<dbReference type="MGI" id="MGI:1915749">
    <property type="gene designation" value="Mrpl53"/>
</dbReference>
<dbReference type="VEuPathDB" id="HostDB:ENSMUSG00000030037"/>
<dbReference type="eggNOG" id="ENOG502S5X4">
    <property type="taxonomic scope" value="Eukaryota"/>
</dbReference>
<dbReference type="GeneTree" id="ENSGT00390000001440"/>
<dbReference type="HOGENOM" id="CLU_175193_0_0_1"/>
<dbReference type="InParanoid" id="Q9D1H8"/>
<dbReference type="OMA" id="CKMWERI"/>
<dbReference type="OrthoDB" id="6618793at2759"/>
<dbReference type="PhylomeDB" id="Q9D1H8"/>
<dbReference type="TreeFam" id="TF300292"/>
<dbReference type="Reactome" id="R-MMU-5389840">
    <property type="pathway name" value="Mitochondrial translation elongation"/>
</dbReference>
<dbReference type="Reactome" id="R-MMU-5419276">
    <property type="pathway name" value="Mitochondrial translation termination"/>
</dbReference>
<dbReference type="BioGRID-ORCS" id="68499">
    <property type="hits" value="19 hits in 76 CRISPR screens"/>
</dbReference>
<dbReference type="ChiTaRS" id="Mrpl53">
    <property type="organism name" value="mouse"/>
</dbReference>
<dbReference type="PRO" id="PR:Q9D1H8"/>
<dbReference type="Proteomes" id="UP000000589">
    <property type="component" value="Chromosome 6"/>
</dbReference>
<dbReference type="RNAct" id="Q9D1H8">
    <property type="molecule type" value="protein"/>
</dbReference>
<dbReference type="Bgee" id="ENSMUSG00000030037">
    <property type="expression patterns" value="Expressed in quadriceps femoris and 69 other cell types or tissues"/>
</dbReference>
<dbReference type="GO" id="GO:0005743">
    <property type="term" value="C:mitochondrial inner membrane"/>
    <property type="evidence" value="ECO:0000303"/>
    <property type="project" value="ComplexPortal"/>
</dbReference>
<dbReference type="GO" id="GO:0005762">
    <property type="term" value="C:mitochondrial large ribosomal subunit"/>
    <property type="evidence" value="ECO:0000250"/>
    <property type="project" value="UniProtKB"/>
</dbReference>
<dbReference type="GO" id="GO:0005739">
    <property type="term" value="C:mitochondrion"/>
    <property type="evidence" value="ECO:0007005"/>
    <property type="project" value="MGI"/>
</dbReference>
<dbReference type="GO" id="GO:0032543">
    <property type="term" value="P:mitochondrial translation"/>
    <property type="evidence" value="ECO:0000303"/>
    <property type="project" value="ComplexPortal"/>
</dbReference>
<dbReference type="Gene3D" id="3.40.30.10">
    <property type="entry name" value="Glutaredoxin"/>
    <property type="match status" value="1"/>
</dbReference>
<dbReference type="InterPro" id="IPR052473">
    <property type="entry name" value="mtLSU_mL53"/>
</dbReference>
<dbReference type="InterPro" id="IPR019716">
    <property type="entry name" value="Ribosomal_mL53"/>
</dbReference>
<dbReference type="PANTHER" id="PTHR33618">
    <property type="entry name" value="39S RIBOSOMAL PROTEIN L53, MITOCHONDRIAL"/>
    <property type="match status" value="1"/>
</dbReference>
<dbReference type="PANTHER" id="PTHR33618:SF1">
    <property type="entry name" value="LARGE RIBOSOMAL SUBUNIT PROTEIN ML53"/>
    <property type="match status" value="1"/>
</dbReference>
<dbReference type="Pfam" id="PF10780">
    <property type="entry name" value="MRP_L53"/>
    <property type="match status" value="1"/>
</dbReference>
<organism>
    <name type="scientific">Mus musculus</name>
    <name type="common">Mouse</name>
    <dbReference type="NCBI Taxonomy" id="10090"/>
    <lineage>
        <taxon>Eukaryota</taxon>
        <taxon>Metazoa</taxon>
        <taxon>Chordata</taxon>
        <taxon>Craniata</taxon>
        <taxon>Vertebrata</taxon>
        <taxon>Euteleostomi</taxon>
        <taxon>Mammalia</taxon>
        <taxon>Eutheria</taxon>
        <taxon>Euarchontoglires</taxon>
        <taxon>Glires</taxon>
        <taxon>Rodentia</taxon>
        <taxon>Myomorpha</taxon>
        <taxon>Muroidea</taxon>
        <taxon>Muridae</taxon>
        <taxon>Murinae</taxon>
        <taxon>Mus</taxon>
        <taxon>Mus</taxon>
    </lineage>
</organism>
<accession>Q9D1H8</accession>
<keyword id="KW-0496">Mitochondrion</keyword>
<keyword id="KW-1185">Reference proteome</keyword>
<keyword id="KW-0687">Ribonucleoprotein</keyword>
<keyword id="KW-0689">Ribosomal protein</keyword>
<keyword id="KW-0809">Transit peptide</keyword>
<evidence type="ECO:0000250" key="1">
    <source>
        <dbReference type="UniProtKB" id="Q96EL3"/>
    </source>
</evidence>
<evidence type="ECO:0000255" key="2"/>
<evidence type="ECO:0000256" key="3">
    <source>
        <dbReference type="SAM" id="MobiDB-lite"/>
    </source>
</evidence>
<evidence type="ECO:0000305" key="4"/>
<reference key="1">
    <citation type="journal article" date="2005" name="Science">
        <title>The transcriptional landscape of the mammalian genome.</title>
        <authorList>
            <person name="Carninci P."/>
            <person name="Kasukawa T."/>
            <person name="Katayama S."/>
            <person name="Gough J."/>
            <person name="Frith M.C."/>
            <person name="Maeda N."/>
            <person name="Oyama R."/>
            <person name="Ravasi T."/>
            <person name="Lenhard B."/>
            <person name="Wells C."/>
            <person name="Kodzius R."/>
            <person name="Shimokawa K."/>
            <person name="Bajic V.B."/>
            <person name="Brenner S.E."/>
            <person name="Batalov S."/>
            <person name="Forrest A.R."/>
            <person name="Zavolan M."/>
            <person name="Davis M.J."/>
            <person name="Wilming L.G."/>
            <person name="Aidinis V."/>
            <person name="Allen J.E."/>
            <person name="Ambesi-Impiombato A."/>
            <person name="Apweiler R."/>
            <person name="Aturaliya R.N."/>
            <person name="Bailey T.L."/>
            <person name="Bansal M."/>
            <person name="Baxter L."/>
            <person name="Beisel K.W."/>
            <person name="Bersano T."/>
            <person name="Bono H."/>
            <person name="Chalk A.M."/>
            <person name="Chiu K.P."/>
            <person name="Choudhary V."/>
            <person name="Christoffels A."/>
            <person name="Clutterbuck D.R."/>
            <person name="Crowe M.L."/>
            <person name="Dalla E."/>
            <person name="Dalrymple B.P."/>
            <person name="de Bono B."/>
            <person name="Della Gatta G."/>
            <person name="di Bernardo D."/>
            <person name="Down T."/>
            <person name="Engstrom P."/>
            <person name="Fagiolini M."/>
            <person name="Faulkner G."/>
            <person name="Fletcher C.F."/>
            <person name="Fukushima T."/>
            <person name="Furuno M."/>
            <person name="Futaki S."/>
            <person name="Gariboldi M."/>
            <person name="Georgii-Hemming P."/>
            <person name="Gingeras T.R."/>
            <person name="Gojobori T."/>
            <person name="Green R.E."/>
            <person name="Gustincich S."/>
            <person name="Harbers M."/>
            <person name="Hayashi Y."/>
            <person name="Hensch T.K."/>
            <person name="Hirokawa N."/>
            <person name="Hill D."/>
            <person name="Huminiecki L."/>
            <person name="Iacono M."/>
            <person name="Ikeo K."/>
            <person name="Iwama A."/>
            <person name="Ishikawa T."/>
            <person name="Jakt M."/>
            <person name="Kanapin A."/>
            <person name="Katoh M."/>
            <person name="Kawasawa Y."/>
            <person name="Kelso J."/>
            <person name="Kitamura H."/>
            <person name="Kitano H."/>
            <person name="Kollias G."/>
            <person name="Krishnan S.P."/>
            <person name="Kruger A."/>
            <person name="Kummerfeld S.K."/>
            <person name="Kurochkin I.V."/>
            <person name="Lareau L.F."/>
            <person name="Lazarevic D."/>
            <person name="Lipovich L."/>
            <person name="Liu J."/>
            <person name="Liuni S."/>
            <person name="McWilliam S."/>
            <person name="Madan Babu M."/>
            <person name="Madera M."/>
            <person name="Marchionni L."/>
            <person name="Matsuda H."/>
            <person name="Matsuzawa S."/>
            <person name="Miki H."/>
            <person name="Mignone F."/>
            <person name="Miyake S."/>
            <person name="Morris K."/>
            <person name="Mottagui-Tabar S."/>
            <person name="Mulder N."/>
            <person name="Nakano N."/>
            <person name="Nakauchi H."/>
            <person name="Ng P."/>
            <person name="Nilsson R."/>
            <person name="Nishiguchi S."/>
            <person name="Nishikawa S."/>
            <person name="Nori F."/>
            <person name="Ohara O."/>
            <person name="Okazaki Y."/>
            <person name="Orlando V."/>
            <person name="Pang K.C."/>
            <person name="Pavan W.J."/>
            <person name="Pavesi G."/>
            <person name="Pesole G."/>
            <person name="Petrovsky N."/>
            <person name="Piazza S."/>
            <person name="Reed J."/>
            <person name="Reid J.F."/>
            <person name="Ring B.Z."/>
            <person name="Ringwald M."/>
            <person name="Rost B."/>
            <person name="Ruan Y."/>
            <person name="Salzberg S.L."/>
            <person name="Sandelin A."/>
            <person name="Schneider C."/>
            <person name="Schoenbach C."/>
            <person name="Sekiguchi K."/>
            <person name="Semple C.A."/>
            <person name="Seno S."/>
            <person name="Sessa L."/>
            <person name="Sheng Y."/>
            <person name="Shibata Y."/>
            <person name="Shimada H."/>
            <person name="Shimada K."/>
            <person name="Silva D."/>
            <person name="Sinclair B."/>
            <person name="Sperling S."/>
            <person name="Stupka E."/>
            <person name="Sugiura K."/>
            <person name="Sultana R."/>
            <person name="Takenaka Y."/>
            <person name="Taki K."/>
            <person name="Tammoja K."/>
            <person name="Tan S.L."/>
            <person name="Tang S."/>
            <person name="Taylor M.S."/>
            <person name="Tegner J."/>
            <person name="Teichmann S.A."/>
            <person name="Ueda H.R."/>
            <person name="van Nimwegen E."/>
            <person name="Verardo R."/>
            <person name="Wei C.L."/>
            <person name="Yagi K."/>
            <person name="Yamanishi H."/>
            <person name="Zabarovsky E."/>
            <person name="Zhu S."/>
            <person name="Zimmer A."/>
            <person name="Hide W."/>
            <person name="Bult C."/>
            <person name="Grimmond S.M."/>
            <person name="Teasdale R.D."/>
            <person name="Liu E.T."/>
            <person name="Brusic V."/>
            <person name="Quackenbush J."/>
            <person name="Wahlestedt C."/>
            <person name="Mattick J.S."/>
            <person name="Hume D.A."/>
            <person name="Kai C."/>
            <person name="Sasaki D."/>
            <person name="Tomaru Y."/>
            <person name="Fukuda S."/>
            <person name="Kanamori-Katayama M."/>
            <person name="Suzuki M."/>
            <person name="Aoki J."/>
            <person name="Arakawa T."/>
            <person name="Iida J."/>
            <person name="Imamura K."/>
            <person name="Itoh M."/>
            <person name="Kato T."/>
            <person name="Kawaji H."/>
            <person name="Kawagashira N."/>
            <person name="Kawashima T."/>
            <person name="Kojima M."/>
            <person name="Kondo S."/>
            <person name="Konno H."/>
            <person name="Nakano K."/>
            <person name="Ninomiya N."/>
            <person name="Nishio T."/>
            <person name="Okada M."/>
            <person name="Plessy C."/>
            <person name="Shibata K."/>
            <person name="Shiraki T."/>
            <person name="Suzuki S."/>
            <person name="Tagami M."/>
            <person name="Waki K."/>
            <person name="Watahiki A."/>
            <person name="Okamura-Oho Y."/>
            <person name="Suzuki H."/>
            <person name="Kawai J."/>
            <person name="Hayashizaki Y."/>
        </authorList>
    </citation>
    <scope>NUCLEOTIDE SEQUENCE [LARGE SCALE MRNA]</scope>
    <source>
        <strain>C57BL/6J</strain>
        <tissue>Embryo</tissue>
    </source>
</reference>
<reference key="2">
    <citation type="journal article" date="2004" name="Genome Res.">
        <title>The status, quality, and expansion of the NIH full-length cDNA project: the Mammalian Gene Collection (MGC).</title>
        <authorList>
            <consortium name="The MGC Project Team"/>
        </authorList>
    </citation>
    <scope>NUCLEOTIDE SEQUENCE [LARGE SCALE MRNA]</scope>
    <source>
        <strain>C57BL/6J</strain>
        <tissue>Brain</tissue>
        <tissue>Mammary tumor</tissue>
    </source>
</reference>
<reference key="3">
    <citation type="journal article" date="2010" name="Cell">
        <title>A tissue-specific atlas of mouse protein phosphorylation and expression.</title>
        <authorList>
            <person name="Huttlin E.L."/>
            <person name="Jedrychowski M.P."/>
            <person name="Elias J.E."/>
            <person name="Goswami T."/>
            <person name="Rad R."/>
            <person name="Beausoleil S.A."/>
            <person name="Villen J."/>
            <person name="Haas W."/>
            <person name="Sowa M.E."/>
            <person name="Gygi S.P."/>
        </authorList>
    </citation>
    <scope>IDENTIFICATION BY MASS SPECTROMETRY [LARGE SCALE ANALYSIS]</scope>
    <source>
        <tissue>Brain</tissue>
        <tissue>Brown adipose tissue</tissue>
        <tissue>Heart</tissue>
        <tissue>Kidney</tissue>
        <tissue>Liver</tissue>
        <tissue>Pancreas</tissue>
        <tissue>Spleen</tissue>
        <tissue>Testis</tissue>
    </source>
</reference>
<protein>
    <recommendedName>
        <fullName evidence="4">Large ribosomal subunit protein mL53</fullName>
    </recommendedName>
    <alternativeName>
        <fullName>39S ribosomal protein L53, mitochondrial</fullName>
        <shortName>L53mt</shortName>
        <shortName>MRP-L53</shortName>
    </alternativeName>
</protein>
<sequence length="118" mass="12738">MAAALARLGLRPVKLVRVQFCPFEKNVESTRTFLQTVSSEKVRATNLNCSVIADVRHDGSEPCVDVLFGDGYRLIMRGAHLTTQEMLSALASHIRDRNAAAASAPGADKVAPGTSTRR</sequence>
<feature type="transit peptide" description="Mitochondrion" evidence="2">
    <location>
        <begin position="1"/>
        <end status="unknown"/>
    </location>
</feature>
<feature type="chain" id="PRO_0000261665" description="Large ribosomal subunit protein mL53">
    <location>
        <begin status="unknown"/>
        <end position="118"/>
    </location>
</feature>
<feature type="region of interest" description="Disordered" evidence="3">
    <location>
        <begin position="99"/>
        <end position="118"/>
    </location>
</feature>
<gene>
    <name type="primary">Mrpl53</name>
</gene>
<proteinExistence type="evidence at protein level"/>